<feature type="chain" id="PRO_0000365415" description="Eukaryotic translation initiation factor 3 subunit G-1">
    <location>
        <begin position="1"/>
        <end position="269"/>
    </location>
</feature>
<feature type="domain" description="RRM" evidence="2">
    <location>
        <begin position="188"/>
        <end position="266"/>
    </location>
</feature>
<dbReference type="EMBL" id="CH933812">
    <property type="protein sequence ID" value="EDW06156.1"/>
    <property type="molecule type" value="Genomic_DNA"/>
</dbReference>
<dbReference type="SMR" id="B4L710"/>
<dbReference type="FunCoup" id="B4L710">
    <property type="interactions" value="1687"/>
</dbReference>
<dbReference type="EnsemblMetazoa" id="FBtr0166790">
    <property type="protein sequence ID" value="FBpp0165282"/>
    <property type="gene ID" value="FBgn0138814"/>
</dbReference>
<dbReference type="EnsemblMetazoa" id="XM_002011278.4">
    <property type="protein sequence ID" value="XP_002011314.1"/>
    <property type="gene ID" value="LOC6585686"/>
</dbReference>
<dbReference type="GeneID" id="6585686"/>
<dbReference type="KEGG" id="dmo:Dmoj_GI16065"/>
<dbReference type="CTD" id="31243"/>
<dbReference type="eggNOG" id="KOG0122">
    <property type="taxonomic scope" value="Eukaryota"/>
</dbReference>
<dbReference type="HOGENOM" id="CLU_034595_0_0_1"/>
<dbReference type="InParanoid" id="B4L710"/>
<dbReference type="OMA" id="ICQGDHF"/>
<dbReference type="OrthoDB" id="639027at2759"/>
<dbReference type="PhylomeDB" id="B4L710"/>
<dbReference type="Proteomes" id="UP000009192">
    <property type="component" value="Unassembled WGS sequence"/>
</dbReference>
<dbReference type="GO" id="GO:0016282">
    <property type="term" value="C:eukaryotic 43S preinitiation complex"/>
    <property type="evidence" value="ECO:0007669"/>
    <property type="project" value="UniProtKB-UniRule"/>
</dbReference>
<dbReference type="GO" id="GO:0033290">
    <property type="term" value="C:eukaryotic 48S preinitiation complex"/>
    <property type="evidence" value="ECO:0007669"/>
    <property type="project" value="UniProtKB-UniRule"/>
</dbReference>
<dbReference type="GO" id="GO:0005852">
    <property type="term" value="C:eukaryotic translation initiation factor 3 complex"/>
    <property type="evidence" value="ECO:0007669"/>
    <property type="project" value="UniProtKB-UniRule"/>
</dbReference>
<dbReference type="GO" id="GO:0003723">
    <property type="term" value="F:RNA binding"/>
    <property type="evidence" value="ECO:0007669"/>
    <property type="project" value="UniProtKB-UniRule"/>
</dbReference>
<dbReference type="GO" id="GO:0003743">
    <property type="term" value="F:translation initiation factor activity"/>
    <property type="evidence" value="ECO:0007669"/>
    <property type="project" value="UniProtKB-UniRule"/>
</dbReference>
<dbReference type="GO" id="GO:0001732">
    <property type="term" value="P:formation of cytoplasmic translation initiation complex"/>
    <property type="evidence" value="ECO:0007669"/>
    <property type="project" value="UniProtKB-UniRule"/>
</dbReference>
<dbReference type="CDD" id="cd12933">
    <property type="entry name" value="eIF3G"/>
    <property type="match status" value="1"/>
</dbReference>
<dbReference type="CDD" id="cd12408">
    <property type="entry name" value="RRM_eIF3G_like"/>
    <property type="match status" value="1"/>
</dbReference>
<dbReference type="FunFam" id="3.30.70.330:FF:000828">
    <property type="entry name" value="Eukaryotic translation initiation factor 3 subunit G"/>
    <property type="match status" value="1"/>
</dbReference>
<dbReference type="Gene3D" id="3.30.70.330">
    <property type="match status" value="1"/>
</dbReference>
<dbReference type="HAMAP" id="MF_03006">
    <property type="entry name" value="eIF3g"/>
    <property type="match status" value="1"/>
</dbReference>
<dbReference type="InterPro" id="IPR017334">
    <property type="entry name" value="eIF3_g"/>
</dbReference>
<dbReference type="InterPro" id="IPR024675">
    <property type="entry name" value="eIF3g_N"/>
</dbReference>
<dbReference type="InterPro" id="IPR034240">
    <property type="entry name" value="eIF3G_RRM"/>
</dbReference>
<dbReference type="InterPro" id="IPR012677">
    <property type="entry name" value="Nucleotide-bd_a/b_plait_sf"/>
</dbReference>
<dbReference type="InterPro" id="IPR035979">
    <property type="entry name" value="RBD_domain_sf"/>
</dbReference>
<dbReference type="InterPro" id="IPR000504">
    <property type="entry name" value="RRM_dom"/>
</dbReference>
<dbReference type="PANTHER" id="PTHR10352">
    <property type="entry name" value="EUKARYOTIC TRANSLATION INITIATION FACTOR 3 SUBUNIT G"/>
    <property type="match status" value="1"/>
</dbReference>
<dbReference type="Pfam" id="PF12353">
    <property type="entry name" value="eIF3g"/>
    <property type="match status" value="1"/>
</dbReference>
<dbReference type="Pfam" id="PF00076">
    <property type="entry name" value="RRM_1"/>
    <property type="match status" value="1"/>
</dbReference>
<dbReference type="PIRSF" id="PIRSF037949">
    <property type="entry name" value="Transl_init_eIF-3_RNA-bind"/>
    <property type="match status" value="1"/>
</dbReference>
<dbReference type="SMART" id="SM00360">
    <property type="entry name" value="RRM"/>
    <property type="match status" value="1"/>
</dbReference>
<dbReference type="SUPFAM" id="SSF54928">
    <property type="entry name" value="RNA-binding domain, RBD"/>
    <property type="match status" value="1"/>
</dbReference>
<dbReference type="PROSITE" id="PS50102">
    <property type="entry name" value="RRM"/>
    <property type="match status" value="1"/>
</dbReference>
<accession>B4L710</accession>
<reference key="1">
    <citation type="journal article" date="2007" name="Nature">
        <title>Evolution of genes and genomes on the Drosophila phylogeny.</title>
        <authorList>
            <consortium name="Drosophila 12 genomes consortium"/>
        </authorList>
    </citation>
    <scope>NUCLEOTIDE SEQUENCE [LARGE SCALE GENOMIC DNA]</scope>
    <source>
        <strain>Tucson 15081-1352.22</strain>
    </source>
</reference>
<comment type="function">
    <text evidence="2">RNA-binding component of the eukaryotic translation initiation factor 3 (eIF-3) complex, which is involved in protein synthesis of a specialized repertoire of mRNAs and, together with other initiation factors, stimulates binding of mRNA and methionyl-tRNAi to the 40S ribosome. The eIF-3 complex specifically targets and initiates translation of a subset of mRNAs involved in cell proliferation. This subunit can bind 18S rRNA.</text>
</comment>
<comment type="subunit">
    <text evidence="2">Component of the eukaryotic translation initiation factor 3 (eIF-3) complex. The eIF-3 complex interacts with pix.</text>
</comment>
<comment type="subcellular location">
    <subcellularLocation>
        <location evidence="2">Cytoplasm</location>
    </subcellularLocation>
</comment>
<comment type="similarity">
    <text evidence="2">Belongs to the eIF-3 subunit G family.</text>
</comment>
<gene>
    <name evidence="1" type="primary">eIF3g1</name>
    <name evidence="2" type="synonym">eIF3-S4</name>
    <name evidence="1" type="synonym">eIF3ga</name>
    <name type="ORF">GI16065</name>
</gene>
<protein>
    <recommendedName>
        <fullName evidence="1">Eukaryotic translation initiation factor 3 subunit G-1</fullName>
    </recommendedName>
    <alternativeName>
        <fullName evidence="2">Eukaryotic translation initiation factor 3 RNA-binding subunit 1</fullName>
        <shortName evidence="2">eIF-3 RNA-binding subunit 1</shortName>
    </alternativeName>
    <alternativeName>
        <fullName evidence="2">Eukaryotic translation initiation factor 3 subunit 4-1</fullName>
    </alternativeName>
</protein>
<evidence type="ECO:0000250" key="1">
    <source>
        <dbReference type="UniProtKB" id="Q9W4X7"/>
    </source>
</evidence>
<evidence type="ECO:0000255" key="2">
    <source>
        <dbReference type="HAMAP-Rule" id="MF_03006"/>
    </source>
</evidence>
<sequence length="269" mass="29955">MPGVETIKSSWADEVELDYGGLPPTTETIENGHKYVTEYKYNKDDKKTKVVRTYKISKQVVPKTVAKRRTWTKFGDSKNDKPGPNSQTTMVSEEIIMQFLNSKEDEKANDPLLDPTKNIAKCRICNGEHWSVNCPYKGTAMDTNLMEKKAAAAASAAVDAPKSGKYVPPFLKDSQKGGMGMRGRDDTAAIRISNLSESMTEADLEELVKKIGPQSKMYLARDKNTGLCKGFAYVHFKQRKDAAAAIEILNGHGYDHLILSVEWSKPQNN</sequence>
<organism>
    <name type="scientific">Drosophila mojavensis</name>
    <name type="common">Fruit fly</name>
    <dbReference type="NCBI Taxonomy" id="7230"/>
    <lineage>
        <taxon>Eukaryota</taxon>
        <taxon>Metazoa</taxon>
        <taxon>Ecdysozoa</taxon>
        <taxon>Arthropoda</taxon>
        <taxon>Hexapoda</taxon>
        <taxon>Insecta</taxon>
        <taxon>Pterygota</taxon>
        <taxon>Neoptera</taxon>
        <taxon>Endopterygota</taxon>
        <taxon>Diptera</taxon>
        <taxon>Brachycera</taxon>
        <taxon>Muscomorpha</taxon>
        <taxon>Ephydroidea</taxon>
        <taxon>Drosophilidae</taxon>
        <taxon>Drosophila</taxon>
    </lineage>
</organism>
<name>EI3G1_DROMO</name>
<keyword id="KW-0963">Cytoplasm</keyword>
<keyword id="KW-0396">Initiation factor</keyword>
<keyword id="KW-0648">Protein biosynthesis</keyword>
<keyword id="KW-1185">Reference proteome</keyword>
<keyword id="KW-0694">RNA-binding</keyword>
<proteinExistence type="inferred from homology"/>